<comment type="catalytic activity">
    <reaction evidence="1">
        <text>tRNA(Leu) + L-leucine + ATP = L-leucyl-tRNA(Leu) + AMP + diphosphate</text>
        <dbReference type="Rhea" id="RHEA:11688"/>
        <dbReference type="Rhea" id="RHEA-COMP:9613"/>
        <dbReference type="Rhea" id="RHEA-COMP:9622"/>
        <dbReference type="ChEBI" id="CHEBI:30616"/>
        <dbReference type="ChEBI" id="CHEBI:33019"/>
        <dbReference type="ChEBI" id="CHEBI:57427"/>
        <dbReference type="ChEBI" id="CHEBI:78442"/>
        <dbReference type="ChEBI" id="CHEBI:78494"/>
        <dbReference type="ChEBI" id="CHEBI:456215"/>
        <dbReference type="EC" id="6.1.1.4"/>
    </reaction>
</comment>
<comment type="subcellular location">
    <subcellularLocation>
        <location evidence="1">Cytoplasm</location>
    </subcellularLocation>
</comment>
<comment type="similarity">
    <text evidence="1">Belongs to the class-I aminoacyl-tRNA synthetase family.</text>
</comment>
<feature type="chain" id="PRO_1000009303" description="Leucine--tRNA ligase">
    <location>
        <begin position="1"/>
        <end position="877"/>
    </location>
</feature>
<feature type="short sequence motif" description="'HIGH' region">
    <location>
        <begin position="43"/>
        <end position="53"/>
    </location>
</feature>
<feature type="short sequence motif" description="'KMSKS' region">
    <location>
        <begin position="628"/>
        <end position="632"/>
    </location>
</feature>
<feature type="binding site" evidence="1">
    <location>
        <position position="631"/>
    </location>
    <ligand>
        <name>ATP</name>
        <dbReference type="ChEBI" id="CHEBI:30616"/>
    </ligand>
</feature>
<protein>
    <recommendedName>
        <fullName evidence="1">Leucine--tRNA ligase</fullName>
        <ecNumber evidence="1">6.1.1.4</ecNumber>
    </recommendedName>
    <alternativeName>
        <fullName evidence="1">Leucyl-tRNA synthetase</fullName>
        <shortName evidence="1">LeuRS</shortName>
    </alternativeName>
</protein>
<organism>
    <name type="scientific">Brucella abortus biovar 1 (strain 9-941)</name>
    <dbReference type="NCBI Taxonomy" id="262698"/>
    <lineage>
        <taxon>Bacteria</taxon>
        <taxon>Pseudomonadati</taxon>
        <taxon>Pseudomonadota</taxon>
        <taxon>Alphaproteobacteria</taxon>
        <taxon>Hyphomicrobiales</taxon>
        <taxon>Brucellaceae</taxon>
        <taxon>Brucella/Ochrobactrum group</taxon>
        <taxon>Brucella</taxon>
    </lineage>
</organism>
<name>SYL_BRUAB</name>
<dbReference type="EC" id="6.1.1.4" evidence="1"/>
<dbReference type="EMBL" id="AE017223">
    <property type="protein sequence ID" value="AAX75104.1"/>
    <property type="molecule type" value="Genomic_DNA"/>
</dbReference>
<dbReference type="RefSeq" id="WP_002964884.1">
    <property type="nucleotide sequence ID" value="NC_006932.1"/>
</dbReference>
<dbReference type="SMR" id="Q57B80"/>
<dbReference type="EnsemblBacteria" id="AAX75104">
    <property type="protein sequence ID" value="AAX75104"/>
    <property type="gene ID" value="BruAb1_1787"/>
</dbReference>
<dbReference type="KEGG" id="bmb:BruAb1_1787"/>
<dbReference type="HOGENOM" id="CLU_004427_0_0_5"/>
<dbReference type="Proteomes" id="UP000000540">
    <property type="component" value="Chromosome I"/>
</dbReference>
<dbReference type="GO" id="GO:0005829">
    <property type="term" value="C:cytosol"/>
    <property type="evidence" value="ECO:0007669"/>
    <property type="project" value="TreeGrafter"/>
</dbReference>
<dbReference type="GO" id="GO:0002161">
    <property type="term" value="F:aminoacyl-tRNA deacylase activity"/>
    <property type="evidence" value="ECO:0007669"/>
    <property type="project" value="InterPro"/>
</dbReference>
<dbReference type="GO" id="GO:0005524">
    <property type="term" value="F:ATP binding"/>
    <property type="evidence" value="ECO:0007669"/>
    <property type="project" value="UniProtKB-UniRule"/>
</dbReference>
<dbReference type="GO" id="GO:0004823">
    <property type="term" value="F:leucine-tRNA ligase activity"/>
    <property type="evidence" value="ECO:0007669"/>
    <property type="project" value="UniProtKB-UniRule"/>
</dbReference>
<dbReference type="GO" id="GO:0006429">
    <property type="term" value="P:leucyl-tRNA aminoacylation"/>
    <property type="evidence" value="ECO:0007669"/>
    <property type="project" value="UniProtKB-UniRule"/>
</dbReference>
<dbReference type="CDD" id="cd07958">
    <property type="entry name" value="Anticodon_Ia_Leu_BEm"/>
    <property type="match status" value="1"/>
</dbReference>
<dbReference type="CDD" id="cd00812">
    <property type="entry name" value="LeuRS_core"/>
    <property type="match status" value="1"/>
</dbReference>
<dbReference type="FunFam" id="1.10.730.10:FF:000002">
    <property type="entry name" value="Leucine--tRNA ligase"/>
    <property type="match status" value="1"/>
</dbReference>
<dbReference type="FunFam" id="3.40.50.620:FF:000003">
    <property type="entry name" value="Leucine--tRNA ligase"/>
    <property type="match status" value="1"/>
</dbReference>
<dbReference type="Gene3D" id="2.20.28.290">
    <property type="match status" value="1"/>
</dbReference>
<dbReference type="Gene3D" id="3.10.20.590">
    <property type="match status" value="1"/>
</dbReference>
<dbReference type="Gene3D" id="3.40.50.620">
    <property type="entry name" value="HUPs"/>
    <property type="match status" value="2"/>
</dbReference>
<dbReference type="Gene3D" id="1.10.730.10">
    <property type="entry name" value="Isoleucyl-tRNA Synthetase, Domain 1"/>
    <property type="match status" value="1"/>
</dbReference>
<dbReference type="Gene3D" id="3.90.740.10">
    <property type="entry name" value="Valyl/Leucyl/Isoleucyl-tRNA synthetase, editing domain"/>
    <property type="match status" value="1"/>
</dbReference>
<dbReference type="HAMAP" id="MF_00049_B">
    <property type="entry name" value="Leu_tRNA_synth_B"/>
    <property type="match status" value="1"/>
</dbReference>
<dbReference type="InterPro" id="IPR001412">
    <property type="entry name" value="aa-tRNA-synth_I_CS"/>
</dbReference>
<dbReference type="InterPro" id="IPR002300">
    <property type="entry name" value="aa-tRNA-synth_Ia"/>
</dbReference>
<dbReference type="InterPro" id="IPR002302">
    <property type="entry name" value="Leu-tRNA-ligase"/>
</dbReference>
<dbReference type="InterPro" id="IPR025709">
    <property type="entry name" value="Leu_tRNA-synth_edit"/>
</dbReference>
<dbReference type="InterPro" id="IPR013155">
    <property type="entry name" value="M/V/L/I-tRNA-synth_anticd-bd"/>
</dbReference>
<dbReference type="InterPro" id="IPR015413">
    <property type="entry name" value="Methionyl/Leucyl_tRNA_Synth"/>
</dbReference>
<dbReference type="InterPro" id="IPR014729">
    <property type="entry name" value="Rossmann-like_a/b/a_fold"/>
</dbReference>
<dbReference type="InterPro" id="IPR009080">
    <property type="entry name" value="tRNAsynth_Ia_anticodon-bd"/>
</dbReference>
<dbReference type="InterPro" id="IPR009008">
    <property type="entry name" value="Val/Leu/Ile-tRNA-synth_edit"/>
</dbReference>
<dbReference type="NCBIfam" id="TIGR00396">
    <property type="entry name" value="leuS_bact"/>
    <property type="match status" value="1"/>
</dbReference>
<dbReference type="PANTHER" id="PTHR43740:SF2">
    <property type="entry name" value="LEUCINE--TRNA LIGASE, MITOCHONDRIAL"/>
    <property type="match status" value="1"/>
</dbReference>
<dbReference type="PANTHER" id="PTHR43740">
    <property type="entry name" value="LEUCYL-TRNA SYNTHETASE"/>
    <property type="match status" value="1"/>
</dbReference>
<dbReference type="Pfam" id="PF08264">
    <property type="entry name" value="Anticodon_1"/>
    <property type="match status" value="1"/>
</dbReference>
<dbReference type="Pfam" id="PF00133">
    <property type="entry name" value="tRNA-synt_1"/>
    <property type="match status" value="2"/>
</dbReference>
<dbReference type="Pfam" id="PF13603">
    <property type="entry name" value="tRNA-synt_1_2"/>
    <property type="match status" value="1"/>
</dbReference>
<dbReference type="Pfam" id="PF09334">
    <property type="entry name" value="tRNA-synt_1g"/>
    <property type="match status" value="1"/>
</dbReference>
<dbReference type="PRINTS" id="PR00985">
    <property type="entry name" value="TRNASYNTHLEU"/>
</dbReference>
<dbReference type="SUPFAM" id="SSF47323">
    <property type="entry name" value="Anticodon-binding domain of a subclass of class I aminoacyl-tRNA synthetases"/>
    <property type="match status" value="1"/>
</dbReference>
<dbReference type="SUPFAM" id="SSF52374">
    <property type="entry name" value="Nucleotidylyl transferase"/>
    <property type="match status" value="1"/>
</dbReference>
<dbReference type="SUPFAM" id="SSF50677">
    <property type="entry name" value="ValRS/IleRS/LeuRS editing domain"/>
    <property type="match status" value="1"/>
</dbReference>
<dbReference type="PROSITE" id="PS00178">
    <property type="entry name" value="AA_TRNA_LIGASE_I"/>
    <property type="match status" value="1"/>
</dbReference>
<evidence type="ECO:0000255" key="1">
    <source>
        <dbReference type="HAMAP-Rule" id="MF_00049"/>
    </source>
</evidence>
<gene>
    <name evidence="1" type="primary">leuS</name>
    <name type="ordered locus">BruAb1_1787</name>
</gene>
<proteinExistence type="inferred from homology"/>
<sequence>MAAERYNPRVAEAHWQKVWEENRTFETDNSDSREKYYVLEMFPYPSGRIHMGHVRNYAMGDVVARYKRAKGFNVLHPMGWDAFGMPAENAAMQNKVHPKEWTYQNIATMKRQLKSMGLSLDWSREFATCDVEYYHRQQMLFIDLYEKGLVTRKTSKVNWDPVDNTVLANEQVVDGRGWRSGALVEQRELTQWFFKITDFSEELLAGLDTLDQWPEKVRLMQRNWIGKSEGLQVRFALAAGTAPAGFSEVEVYTTRPDTLFGAAFVAISADHPLAKKLSEGNAALSSFIEECHQQGTSLAALETAEKKGFDTGIKVKHPFDDNWELPVYVANFVLMEYGTGAVFGCPAHDQRDLDFANKYKLKVTPVVLPKGEDAASFSIGETAYTDDGVMINSRFLDGMTPEAAFNEVASRLEKTDLVGRPQAVRKVQFRLRDWGISRQRYWGCPIPMIHCESCGVNPVPRADLPVKLPDDVEFDRPGNPLDRHATWRHVKCPKCGGDARRETDTMDTFVDSSWYYTRFTAPWENEPTDRKAADHWLPVDQYIGGIEHAILHLLYSRFFTRAMKVAGHVGVDEPFKGLFTQGMVVHETYKANGQWVSPADIRIEEIDGKRVATMLDSGAPVEIGSIEKMSKSKKNVVDPDDIIASYGADTARWFVLSDSPPERDVIWTEAGAEGAHRFVQRIWRLVAEAAPALKDVAPKAGTQGEALGVSKAVHKAVKAVGDDIEKLAFNRGVARLYELVNTLSGALQQAADGKADAEMKGALREATEMLVLMTAPMMPHLAEQCLAELGGKVAGKETLVARAPWPVFDPALVVENEIVLPVQINGKKRGDLTIARDADQASIQQAVLELDFVKAALNGGSPKKIIVVPQRIVNVVA</sequence>
<reference key="1">
    <citation type="journal article" date="2005" name="J. Bacteriol.">
        <title>Completion of the genome sequence of Brucella abortus and comparison to the highly similar genomes of Brucella melitensis and Brucella suis.</title>
        <authorList>
            <person name="Halling S.M."/>
            <person name="Peterson-Burch B.D."/>
            <person name="Bricker B.J."/>
            <person name="Zuerner R.L."/>
            <person name="Qing Z."/>
            <person name="Li L.-L."/>
            <person name="Kapur V."/>
            <person name="Alt D.P."/>
            <person name="Olsen S.C."/>
        </authorList>
    </citation>
    <scope>NUCLEOTIDE SEQUENCE [LARGE SCALE GENOMIC DNA]</scope>
    <source>
        <strain>9-941</strain>
    </source>
</reference>
<accession>Q57B80</accession>
<keyword id="KW-0030">Aminoacyl-tRNA synthetase</keyword>
<keyword id="KW-0067">ATP-binding</keyword>
<keyword id="KW-0963">Cytoplasm</keyword>
<keyword id="KW-0436">Ligase</keyword>
<keyword id="KW-0547">Nucleotide-binding</keyword>
<keyword id="KW-0648">Protein biosynthesis</keyword>